<organism evidence="8">
    <name type="scientific">Pisum sativum</name>
    <name type="common">Garden pea</name>
    <name type="synonym">Lathyrus oleraceus</name>
    <dbReference type="NCBI Taxonomy" id="3888"/>
    <lineage>
        <taxon>Eukaryota</taxon>
        <taxon>Viridiplantae</taxon>
        <taxon>Streptophyta</taxon>
        <taxon>Embryophyta</taxon>
        <taxon>Tracheophyta</taxon>
        <taxon>Spermatophyta</taxon>
        <taxon>Magnoliopsida</taxon>
        <taxon>eudicotyledons</taxon>
        <taxon>Gunneridae</taxon>
        <taxon>Pentapetalae</taxon>
        <taxon>rosids</taxon>
        <taxon>fabids</taxon>
        <taxon>Fabales</taxon>
        <taxon>Fabaceae</taxon>
        <taxon>Papilionoideae</taxon>
        <taxon>50 kb inversion clade</taxon>
        <taxon>NPAAA clade</taxon>
        <taxon>Hologalegina</taxon>
        <taxon>IRL clade</taxon>
        <taxon>Fabeae</taxon>
        <taxon>Pisum</taxon>
    </lineage>
</organism>
<protein>
    <recommendedName>
        <fullName evidence="7">Probable UDP-arabinopyranose mutase 1</fullName>
        <ecNumber evidence="3">5.4.99.30</ecNumber>
    </recommendedName>
    <alternativeName>
        <fullName evidence="6">Reversibly glycosylated polypeptide 1</fullName>
        <shortName evidence="6">RGP1</shortName>
    </alternativeName>
    <alternativeName>
        <fullName evidence="7">UDP-L-arabinose mutase 1</fullName>
    </alternativeName>
    <alternativeName>
        <fullName evidence="7">UDP-glucose:protein transglucosylase</fullName>
        <shortName evidence="7">UPTG</shortName>
    </alternativeName>
</protein>
<gene>
    <name evidence="7" type="primary">UPTG</name>
    <name evidence="6" type="synonym">RGP1</name>
</gene>
<comment type="function">
    <text evidence="3 5">Probable UDP-L-arabinose mutase involved in the biosynthesis of cell wall non-cellulosic polysaccharides (By similarity). Was initially shown to possess an autoglycosylating activity which is dependent on the presence of UDP-glucose and manganese (PubMed:9207152).</text>
</comment>
<comment type="catalytic activity">
    <reaction evidence="3">
        <text>UDP-beta-L-arabinofuranose = UDP-beta-L-arabinopyranose</text>
        <dbReference type="Rhea" id="RHEA:28350"/>
        <dbReference type="ChEBI" id="CHEBI:61457"/>
        <dbReference type="ChEBI" id="CHEBI:61463"/>
        <dbReference type="EC" id="5.4.99.30"/>
    </reaction>
</comment>
<comment type="cofactor">
    <cofactor evidence="3">
        <name>Mn(2+)</name>
        <dbReference type="ChEBI" id="CHEBI:29035"/>
    </cofactor>
    <cofactor evidence="3">
        <name>Mg(2+)</name>
        <dbReference type="ChEBI" id="CHEBI:18420"/>
    </cofactor>
</comment>
<comment type="activity regulation">
    <text evidence="1">Inhibited by inhibitor protein (IP) which may be a form of sucrose synthase.</text>
</comment>
<comment type="subunit">
    <text evidence="1">Homopentamer or homohexamer.</text>
</comment>
<comment type="subcellular location">
    <subcellularLocation>
        <location evidence="5">Secreted</location>
        <location evidence="5">Cell wall</location>
    </subcellularLocation>
    <subcellularLocation>
        <location evidence="5">Cell junction</location>
        <location evidence="5">Plasmodesma</location>
    </subcellularLocation>
    <subcellularLocation>
        <location evidence="5">Golgi apparatus</location>
    </subcellularLocation>
    <text evidence="5">Cell wall-associated, with highest concentrations on plasmodesmata. Also located in the Golgi apparatus.</text>
</comment>
<comment type="domain">
    <text evidence="3">The conserved DXD motif is involved in enzyme activity.</text>
</comment>
<comment type="PTM">
    <text evidence="4 5">Reversibly glycosylated by UDP-glucose, UDP-xylose and UDP-galactose, but not UDP-mannose.</text>
</comment>
<comment type="similarity">
    <text evidence="7">Belongs to the RGP family.</text>
</comment>
<reference key="1">
    <citation type="journal article" date="1997" name="Proc. Natl. Acad. Sci. U.S.A.">
        <title>A reversibly glycosylated polypeptide (RGP1) possibly involved in plant cell wall synthesis: purification, gene cloning, and trans-Golgi localization.</title>
        <authorList>
            <person name="Dhugga K.S."/>
            <person name="Tiwari S.C."/>
            <person name="Ray P.M."/>
        </authorList>
    </citation>
    <scope>NUCLEOTIDE SEQUENCE [MRNA]</scope>
    <scope>PROTEIN SEQUENCE OF 24-37 AND 159-173</scope>
    <scope>FUNCTION</scope>
    <scope>SUBCELLULAR LOCATION</scope>
    <scope>GLYCOSYLATION</scope>
    <source>
        <strain evidence="5">cv. Early Alaska</strain>
        <tissue evidence="8">Stem</tissue>
    </source>
</reference>
<reference key="2">
    <citation type="journal article" date="1991" name="J. Biol. Chem.">
        <title>Plant polypeptides reversibly glycosylated by UDP-glucose. Possible components of Golgi beta-glucan synthase in pea cells.</title>
        <authorList>
            <person name="Dhugga K.S."/>
            <person name="Ulvskov P."/>
            <person name="Gallagher S.R."/>
            <person name="Ray P.M."/>
        </authorList>
    </citation>
    <scope>SUBCELLULAR LOCATION</scope>
    <scope>GLYCOSYLATION</scope>
</reference>
<sequence>MASLPKPTPLLKDELDIVIPTIRNLDFLEMWRPFFEQYHLIIVQDGDPSKVIKVPEGFDYELYNRNDINRILGPKASCISFKDSACRCFGYMVSKKKYIYTIDDDCFVAKDPTGHEINALEQHIKNLLSPSTPFFFNTLYDPYREGTDFVRGYPFSLREGVPTAVSHGLWLNIPDYDAPTQLVKPHERNTRFVDAVLTIPKGSLFPMCGMNLAFNRELIGPAMYFGLMGDGQPIGRYDDMWAGWCIKVICDHLGYGVKTGLPYIWHSKASNPFVNLKKEYKGIFWQEEIIPFFQAATLSKDCTSVQKCYIELSKQVKEKLGTIDPYFIKLADAMVTWVEAWDEINNNKSEETTSTKASEVAATK</sequence>
<keyword id="KW-0965">Cell junction</keyword>
<keyword id="KW-0134">Cell wall</keyword>
<keyword id="KW-0961">Cell wall biogenesis/degradation</keyword>
<keyword id="KW-0135">Cellulose biosynthesis</keyword>
<keyword id="KW-0903">Direct protein sequencing</keyword>
<keyword id="KW-0325">Glycoprotein</keyword>
<keyword id="KW-0333">Golgi apparatus</keyword>
<keyword id="KW-0413">Isomerase</keyword>
<keyword id="KW-0964">Secreted</keyword>
<accession>O04300</accession>
<evidence type="ECO:0000250" key="1"/>
<evidence type="ECO:0000250" key="2">
    <source>
        <dbReference type="UniProtKB" id="P80607"/>
    </source>
</evidence>
<evidence type="ECO:0000250" key="3">
    <source>
        <dbReference type="UniProtKB" id="Q8H8T0"/>
    </source>
</evidence>
<evidence type="ECO:0000269" key="4">
    <source>
    </source>
</evidence>
<evidence type="ECO:0000269" key="5">
    <source>
    </source>
</evidence>
<evidence type="ECO:0000303" key="6">
    <source>
    </source>
</evidence>
<evidence type="ECO:0000305" key="7"/>
<evidence type="ECO:0000312" key="8">
    <source>
        <dbReference type="EMBL" id="AAB88408.1"/>
    </source>
</evidence>
<proteinExistence type="evidence at protein level"/>
<feature type="chain" id="PRO_0000221194" description="Probable UDP-arabinopyranose mutase 1">
    <location>
        <begin position="1"/>
        <end position="364"/>
    </location>
</feature>
<feature type="short sequence motif" description="DXD motif" evidence="3">
    <location>
        <begin position="103"/>
        <end position="105"/>
    </location>
</feature>
<feature type="site" description="Required for activity" evidence="3">
    <location>
        <position position="151"/>
    </location>
</feature>
<feature type="site" description="Required for activity" evidence="3">
    <location>
        <position position="158"/>
    </location>
</feature>
<feature type="glycosylation site" description="N-linked (Glc...) arginine" evidence="2">
    <location>
        <position position="151"/>
    </location>
</feature>
<name>RGP1_PEA</name>
<dbReference type="EC" id="5.4.99.30" evidence="3"/>
<dbReference type="EMBL" id="U31565">
    <property type="protein sequence ID" value="AAB88408.1"/>
    <property type="molecule type" value="mRNA"/>
</dbReference>
<dbReference type="PIR" id="T06507">
    <property type="entry name" value="T06507"/>
</dbReference>
<dbReference type="SMR" id="O04300"/>
<dbReference type="CAZy" id="GT75">
    <property type="family name" value="Glycosyltransferase Family 75"/>
</dbReference>
<dbReference type="GlyCosmos" id="O04300">
    <property type="glycosylation" value="1 site, No reported glycans"/>
</dbReference>
<dbReference type="EnsemblPlants" id="Psat2g132960.1">
    <property type="protein sequence ID" value="Psat2g132960.1.cds"/>
    <property type="gene ID" value="Psat2g132960"/>
</dbReference>
<dbReference type="Gramene" id="Psat2g132960.1">
    <property type="protein sequence ID" value="Psat2g132960.1.cds"/>
    <property type="gene ID" value="Psat2g132960"/>
</dbReference>
<dbReference type="OrthoDB" id="1020896at2759"/>
<dbReference type="GO" id="GO:0005829">
    <property type="term" value="C:cytosol"/>
    <property type="evidence" value="ECO:0007669"/>
    <property type="project" value="TreeGrafter"/>
</dbReference>
<dbReference type="GO" id="GO:0005576">
    <property type="term" value="C:extracellular region"/>
    <property type="evidence" value="ECO:0007669"/>
    <property type="project" value="UniProtKB-KW"/>
</dbReference>
<dbReference type="GO" id="GO:0005794">
    <property type="term" value="C:Golgi apparatus"/>
    <property type="evidence" value="ECO:0000314"/>
    <property type="project" value="UniProtKB"/>
</dbReference>
<dbReference type="GO" id="GO:0009506">
    <property type="term" value="C:plasmodesma"/>
    <property type="evidence" value="ECO:0000314"/>
    <property type="project" value="UniProtKB"/>
</dbReference>
<dbReference type="GO" id="GO:0052691">
    <property type="term" value="F:UDP-arabinopyranose mutase activity"/>
    <property type="evidence" value="ECO:0007669"/>
    <property type="project" value="UniProtKB-EC"/>
</dbReference>
<dbReference type="GO" id="GO:0071555">
    <property type="term" value="P:cell wall organization"/>
    <property type="evidence" value="ECO:0007669"/>
    <property type="project" value="UniProtKB-KW"/>
</dbReference>
<dbReference type="GO" id="GO:0030244">
    <property type="term" value="P:cellulose biosynthetic process"/>
    <property type="evidence" value="ECO:0007669"/>
    <property type="project" value="UniProtKB-KW"/>
</dbReference>
<dbReference type="GO" id="GO:0071669">
    <property type="term" value="P:plant-type cell wall organization or biogenesis"/>
    <property type="evidence" value="ECO:0007669"/>
    <property type="project" value="InterPro"/>
</dbReference>
<dbReference type="GO" id="GO:0006486">
    <property type="term" value="P:protein glycosylation"/>
    <property type="evidence" value="ECO:0000314"/>
    <property type="project" value="UniProtKB"/>
</dbReference>
<dbReference type="GO" id="GO:0033356">
    <property type="term" value="P:UDP-L-arabinose metabolic process"/>
    <property type="evidence" value="ECO:0007669"/>
    <property type="project" value="TreeGrafter"/>
</dbReference>
<dbReference type="InterPro" id="IPR029044">
    <property type="entry name" value="Nucleotide-diphossugar_trans"/>
</dbReference>
<dbReference type="InterPro" id="IPR004901">
    <property type="entry name" value="RGP"/>
</dbReference>
<dbReference type="InterPro" id="IPR037595">
    <property type="entry name" value="RGP_fam"/>
</dbReference>
<dbReference type="PANTHER" id="PTHR31682:SF5">
    <property type="entry name" value="ALPHA-1,4-GLUCAN-PROTEIN SYNTHASE"/>
    <property type="match status" value="1"/>
</dbReference>
<dbReference type="PANTHER" id="PTHR31682">
    <property type="entry name" value="UDP-ARABINOSE MUTASE"/>
    <property type="match status" value="1"/>
</dbReference>
<dbReference type="Pfam" id="PF03214">
    <property type="entry name" value="RGP"/>
    <property type="match status" value="1"/>
</dbReference>
<dbReference type="PIRSF" id="PIRSF016429">
    <property type="entry name" value="UPTG"/>
    <property type="match status" value="1"/>
</dbReference>
<dbReference type="SUPFAM" id="SSF53448">
    <property type="entry name" value="Nucleotide-diphospho-sugar transferases"/>
    <property type="match status" value="1"/>
</dbReference>